<evidence type="ECO:0000250" key="1">
    <source>
        <dbReference type="UniProtKB" id="K0P2S0"/>
    </source>
</evidence>
<evidence type="ECO:0000250" key="2">
    <source>
        <dbReference type="UniProtKB" id="P29557"/>
    </source>
</evidence>
<evidence type="ECO:0000250" key="3">
    <source>
        <dbReference type="UniProtKB" id="Q00LS8"/>
    </source>
</evidence>
<evidence type="ECO:0000256" key="4">
    <source>
        <dbReference type="SAM" id="MobiDB-lite"/>
    </source>
</evidence>
<evidence type="ECO:0000269" key="5">
    <source>
    </source>
</evidence>
<evidence type="ECO:0000269" key="6">
    <source ref="2"/>
</evidence>
<evidence type="ECO:0000303" key="7">
    <source>
    </source>
</evidence>
<evidence type="ECO:0000303" key="8">
    <source>
    </source>
</evidence>
<evidence type="ECO:0000303" key="9">
    <source ref="2"/>
</evidence>
<evidence type="ECO:0000303" key="10">
    <source ref="3"/>
</evidence>
<evidence type="ECO:0000305" key="11"/>
<keyword id="KW-0963">Cytoplasm</keyword>
<keyword id="KW-1015">Disulfide bond</keyword>
<keyword id="KW-0396">Initiation factor</keyword>
<keyword id="KW-0539">Nucleus</keyword>
<keyword id="KW-0611">Plant defense</keyword>
<keyword id="KW-0648">Protein biosynthesis</keyword>
<keyword id="KW-1185">Reference proteome</keyword>
<keyword id="KW-0694">RNA-binding</keyword>
<keyword id="KW-0810">Translation regulation</keyword>
<gene>
    <name evidence="8 9" type="primary">eIF4E</name>
    <name evidence="10" type="synonym">EIF4E2-T</name>
    <name evidence="9" type="synonym">T015277</name>
    <name type="ORF">LOC107829212</name>
</gene>
<comment type="function">
    <text evidence="5 6">Component of the protein complex eIF4F, which is involved in the recognition of the mRNA cap, ATP-dependent unwinding of 5'-terminal secondary structure and recruitment of mRNA to the ribosome (PubMed:15988567). Recognizes and binds the 7-methylguanosine-containing mRNA cap during an early step in the initiation of protein synthesis and facilitates ribosome binding by inducing the unwinding of the mRNAs secondary structures (PubMed:15988567). Key component of recessive resistance to potyviruses (Ref.2).</text>
</comment>
<comment type="function">
    <text evidence="6">(Microbial infection) Susceptibility host factor required for viral infection (e.g. potato virus Y (PVY) and pepper mottle virus (PepMoV)) by recruiting viral RNAs to the host ribosomal complex via an interaction with viral genome-linked protein (VPg).</text>
</comment>
<comment type="subunit">
    <text evidence="2">EIF4F is a multi-subunit complex, the composition of which varies with external and internal environmental conditions (By similarity). It is composed of at least EIF4A, EIF4E and EIF4G (By similarity). EIF4E is also known to interact with other partners (By similarity). In higher plants two isoforms of EIF4F have been identified, named isoform EIF4F and isoform EIF(iso)4F (By similarity). Isoform EIF4F has subunits p220 and p26, whereas isoform EIF(iso)4F has subunits p82 and p28 (By similarity).</text>
</comment>
<comment type="subcellular location">
    <subcellularLocation>
        <location evidence="1">Nucleus</location>
    </subcellularLocation>
    <subcellularLocation>
        <location evidence="1">Cytoplasm</location>
    </subcellularLocation>
</comment>
<comment type="tissue specificity">
    <text evidence="5 6">Expressed ubiquitously in seedlings, roots, leaves, sepals, petals, anthers and dehisced pollen, with highest levels in pollen, maturing anthers and roots (PubMed:15988567). Strongly expressed in susceptible plants but not in resistant ones (Ref.2).</text>
</comment>
<comment type="PTM">
    <text evidence="2">According to the redox status, the Cys-120-Cys-158 disulfide bridge may have a role in regulating protein function by affecting its ability to bind capped mRNA.</text>
</comment>
<comment type="disruption phenotype">
    <text evidence="5">Plants lacking both eIF4E and eIFiso4E are semi-dwarf and exhibit an overall reduction in polyribosome loading.</text>
</comment>
<comment type="similarity">
    <text evidence="11">Belongs to the eukaryotic initiation factor 4E family.</text>
</comment>
<accession>A0A075QQ08</accession>
<accession>A0A7H1JMP3</accession>
<accession>D3UW24</accession>
<proteinExistence type="evidence at transcript level"/>
<organism>
    <name type="scientific">Nicotiana tabacum</name>
    <name type="common">Common tobacco</name>
    <dbReference type="NCBI Taxonomy" id="4097"/>
    <lineage>
        <taxon>Eukaryota</taxon>
        <taxon>Viridiplantae</taxon>
        <taxon>Streptophyta</taxon>
        <taxon>Embryophyta</taxon>
        <taxon>Tracheophyta</taxon>
        <taxon>Spermatophyta</taxon>
        <taxon>Magnoliopsida</taxon>
        <taxon>eudicotyledons</taxon>
        <taxon>Gunneridae</taxon>
        <taxon>Pentapetalae</taxon>
        <taxon>asterids</taxon>
        <taxon>lamiids</taxon>
        <taxon>Solanales</taxon>
        <taxon>Solanaceae</taxon>
        <taxon>Nicotianoideae</taxon>
        <taxon>Nicotianeae</taxon>
        <taxon>Nicotiana</taxon>
    </lineage>
</organism>
<dbReference type="EMBL" id="FN666433">
    <property type="protein sequence ID" value="CBJ34332.1"/>
    <property type="molecule type" value="mRNA"/>
</dbReference>
<dbReference type="EMBL" id="KM202067">
    <property type="protein sequence ID" value="AIG20720.1"/>
    <property type="molecule type" value="mRNA"/>
</dbReference>
<dbReference type="EMBL" id="MN897003">
    <property type="protein sequence ID" value="QNT12790.1"/>
    <property type="molecule type" value="mRNA"/>
</dbReference>
<dbReference type="RefSeq" id="NP_001313148.1">
    <property type="nucleotide sequence ID" value="NM_001326219.1"/>
</dbReference>
<dbReference type="SMR" id="A0A075QQ08"/>
<dbReference type="STRING" id="4097.A0A075QQ08"/>
<dbReference type="PaxDb" id="4097-A0A075QQ08"/>
<dbReference type="GeneID" id="107829212"/>
<dbReference type="KEGG" id="nta:107829212"/>
<dbReference type="OMA" id="QTEFKMM"/>
<dbReference type="OrthoDB" id="590761at2759"/>
<dbReference type="Proteomes" id="UP000084051">
    <property type="component" value="Unplaced"/>
</dbReference>
<dbReference type="GO" id="GO:0005737">
    <property type="term" value="C:cytoplasm"/>
    <property type="evidence" value="ECO:0000250"/>
    <property type="project" value="UniProtKB"/>
</dbReference>
<dbReference type="GO" id="GO:0016281">
    <property type="term" value="C:eukaryotic translation initiation factor 4F complex"/>
    <property type="evidence" value="ECO:0000318"/>
    <property type="project" value="GO_Central"/>
</dbReference>
<dbReference type="GO" id="GO:0005634">
    <property type="term" value="C:nucleus"/>
    <property type="evidence" value="ECO:0000250"/>
    <property type="project" value="UniProtKB"/>
</dbReference>
<dbReference type="GO" id="GO:0000340">
    <property type="term" value="F:RNA 7-methylguanosine cap binding"/>
    <property type="evidence" value="ECO:0000318"/>
    <property type="project" value="GO_Central"/>
</dbReference>
<dbReference type="GO" id="GO:0003723">
    <property type="term" value="F:RNA binding"/>
    <property type="evidence" value="ECO:0000250"/>
    <property type="project" value="UniProtKB"/>
</dbReference>
<dbReference type="GO" id="GO:0003743">
    <property type="term" value="F:translation initiation factor activity"/>
    <property type="evidence" value="ECO:0000250"/>
    <property type="project" value="UniProtKB"/>
</dbReference>
<dbReference type="GO" id="GO:0051607">
    <property type="term" value="P:defense response to virus"/>
    <property type="evidence" value="ECO:0000250"/>
    <property type="project" value="UniProtKB"/>
</dbReference>
<dbReference type="GO" id="GO:0006417">
    <property type="term" value="P:regulation of translation"/>
    <property type="evidence" value="ECO:0007669"/>
    <property type="project" value="UniProtKB-KW"/>
</dbReference>
<dbReference type="GO" id="GO:0006413">
    <property type="term" value="P:translational initiation"/>
    <property type="evidence" value="ECO:0000250"/>
    <property type="project" value="UniProtKB"/>
</dbReference>
<dbReference type="FunFam" id="3.30.760.10:FF:000003">
    <property type="entry name" value="Eukaryotic translation initiation factor 4E"/>
    <property type="match status" value="1"/>
</dbReference>
<dbReference type="Gene3D" id="3.30.760.10">
    <property type="entry name" value="RNA Cap, Translation Initiation Factor Eif4e"/>
    <property type="match status" value="1"/>
</dbReference>
<dbReference type="InterPro" id="IPR023398">
    <property type="entry name" value="TIF_eIF4e-like"/>
</dbReference>
<dbReference type="InterPro" id="IPR001040">
    <property type="entry name" value="TIF_eIF_4E"/>
</dbReference>
<dbReference type="InterPro" id="IPR019770">
    <property type="entry name" value="TIF_eIF_4E_CS"/>
</dbReference>
<dbReference type="PANTHER" id="PTHR11960">
    <property type="entry name" value="EUKARYOTIC TRANSLATION INITIATION FACTOR 4E RELATED"/>
    <property type="match status" value="1"/>
</dbReference>
<dbReference type="PANTHER" id="PTHR11960:SF8">
    <property type="entry name" value="EUKARYOTIC TRANSLATION INITIATION FACTOR 4E1-RELATED"/>
    <property type="match status" value="1"/>
</dbReference>
<dbReference type="Pfam" id="PF01652">
    <property type="entry name" value="IF4E"/>
    <property type="match status" value="1"/>
</dbReference>
<dbReference type="SUPFAM" id="SSF55418">
    <property type="entry name" value="eIF4e-like"/>
    <property type="match status" value="1"/>
</dbReference>
<dbReference type="PROSITE" id="PS00813">
    <property type="entry name" value="IF4E"/>
    <property type="match status" value="1"/>
</dbReference>
<protein>
    <recommendedName>
        <fullName evidence="8 9">Eukaryotic translation initiation factor 4E-1</fullName>
        <shortName evidence="7">NteIF4E1</shortName>
        <shortName evidence="8">eIF4E-1</shortName>
    </recommendedName>
    <alternativeName>
        <fullName evidence="10">Eukaryotic translation initiation factor 4E2-T</fullName>
        <shortName evidence="10">eIF4E2-T</shortName>
    </alternativeName>
    <alternativeName>
        <fullName evidence="11">eIF-4F 25 kDa subunit</fullName>
    </alternativeName>
    <alternativeName>
        <fullName evidence="11">eIF-4F p26 subunit</fullName>
    </alternativeName>
    <alternativeName>
        <fullName evidence="11">mRNA cap-binding protein</fullName>
    </alternativeName>
</protein>
<name>IF4E1_TOBAC</name>
<sequence length="222" mass="25217">MVDEVEKPASLEESKTNTREVEEGAEEVIESDDTMSSLGNPCKAMKHPLEHSWTFWFDNPSGKSKQAAWGSSIRPIYTFSTVEDFWSVYNNIHHPSKLAVGADFHCFKNKIEPKWEDPVCASGGKWTMSFSRGKSDTCWLYTLLAMIGEQFDCGDEICGAVINVRVRQEKIALWTRNAANETAQVSIGKQWKEFLDYNDSIGFIFHDDAKKLDRAAKNRYSV</sequence>
<reference key="1">
    <citation type="journal article" date="2011" name="J. Virol.">
        <title>Helper component proteinase of the genus Potyvirus is an interaction partner of translation initiation factors eIF(iso)4E and eIF4E and contains a 4E binding motif.</title>
        <authorList>
            <person name="Ala-Poikela M.S."/>
            <person name="Goytia E."/>
            <person name="Haikonen T."/>
            <person name="Rajamaeki M.L."/>
            <person name="Valkonen J.P.T."/>
        </authorList>
    </citation>
    <scope>NUCLEOTIDE SEQUENCE [MRNA]</scope>
    <source>
        <tissue>Leaf</tissue>
    </source>
</reference>
<reference key="2">
    <citation type="journal article" date="2015" name="Plant Mol. Biol. Rep.">
        <title>A eukaryotic translation Initiation Factor 4E (eIF4E) is responsible for the 'va' Tobacco recessive resistance to Potyviruses.</title>
        <authorList>
            <person name="Julio E."/>
            <person name="Cotucheau J."/>
            <person name="Decorps C."/>
            <person name="Volpatti R."/>
            <person name="Sentenac C."/>
            <person name="Candresse T."/>
            <person name="Dorlhac de Borne F."/>
        </authorList>
    </citation>
    <scope>NUCLEOTIDE SEQUENCE [MRNA]</scope>
    <scope>FUNCTION</scope>
    <scope>FUNCTION (MICROBIAL INFECTION)</scope>
    <scope>TISSUE SPECIFICITY</scope>
    <source>
        <tissue>Leaf</tissue>
        <tissue>Root</tissue>
        <tissue>Stem</tissue>
    </source>
</reference>
<reference key="3">
    <citation type="submission" date="2020-01" db="EMBL/GenBank/DDBJ databases">
        <title>Simultaneous mutation of multiple eukaryotic translation-initiation factor genes by CRISPR/Cas9 confers durable and broad resistance to potyviruses in tobacco.</title>
        <authorList>
            <person name="Liu Y."/>
            <person name="Huang C."/>
            <person name="Li Z."/>
        </authorList>
    </citation>
    <scope>NUCLEOTIDE SEQUENCE [MRNA]</scope>
</reference>
<reference key="4">
    <citation type="journal article" date="2014" name="Nat. Commun.">
        <title>The tobacco genome sequence and its comparison with those of tomato and potato.</title>
        <authorList>
            <person name="Sierro N."/>
            <person name="Battey J.N."/>
            <person name="Ouadi S."/>
            <person name="Bakaher N."/>
            <person name="Bovet L."/>
            <person name="Willig A."/>
            <person name="Goepfert S."/>
            <person name="Peitsch M.C."/>
            <person name="Ivanov N.V."/>
        </authorList>
    </citation>
    <scope>NUCLEOTIDE SEQUENCE [LARGE SCALE GENOMIC DNA]</scope>
    <source>
        <strain>cv. TN90</strain>
    </source>
</reference>
<reference key="5">
    <citation type="journal article" date="2005" name="Plant Mol. Biol.">
        <title>Translation initiation factors eIF4E and eIFiso4E are required for polysome formation and regulate plant growth in tobacco.</title>
        <authorList>
            <person name="Combe J.P."/>
            <person name="Petracek M.E."/>
            <person name="van Eldik G."/>
            <person name="Meulewaeter F."/>
            <person name="Twell D."/>
        </authorList>
    </citation>
    <scope>FUNCTION</scope>
    <scope>DISRUPTION PHENOTYPE</scope>
    <scope>TISSUE SPECIFICITY</scope>
    <source>
        <strain>cv. Samsun</strain>
    </source>
</reference>
<reference key="6">
    <citation type="journal article" date="2014" name="Infect. Genet. Evol.">
        <title>Evolution of plant eukaryotic initiation factor 4E (eIF4E) and potyvirus genome-linked protein (VPg): a game of mirrors impacting resistance spectrum and durability.</title>
        <authorList>
            <person name="Moury B."/>
            <person name="Charron C."/>
            <person name="Janzac B."/>
            <person name="Simon V."/>
            <person name="Gallois J.L."/>
            <person name="Palloix A."/>
            <person name="Caranta C."/>
        </authorList>
    </citation>
    <scope>GENE FAMILY</scope>
    <scope>REVIEW</scope>
</reference>
<feature type="chain" id="PRO_0000454055" description="Eukaryotic translation initiation factor 4E-1">
    <location>
        <begin position="1"/>
        <end position="222"/>
    </location>
</feature>
<feature type="region of interest" description="Disordered" evidence="4">
    <location>
        <begin position="1"/>
        <end position="37"/>
    </location>
</feature>
<feature type="region of interest" description="EIF4G-binding" evidence="3">
    <location>
        <begin position="47"/>
        <end position="50"/>
    </location>
</feature>
<feature type="region of interest" description="EIF4G-binding" evidence="3">
    <location>
        <begin position="57"/>
        <end position="93"/>
    </location>
</feature>
<feature type="region of interest" description="EIF4G-binding" evidence="3">
    <location>
        <begin position="141"/>
        <end position="150"/>
    </location>
</feature>
<feature type="compositionally biased region" description="Basic and acidic residues" evidence="4">
    <location>
        <begin position="1"/>
        <end position="22"/>
    </location>
</feature>
<feature type="compositionally biased region" description="Acidic residues" evidence="4">
    <location>
        <begin position="23"/>
        <end position="33"/>
    </location>
</feature>
<feature type="binding site" evidence="2">
    <location>
        <begin position="65"/>
        <end position="70"/>
    </location>
    <ligand>
        <name>mRNA</name>
        <dbReference type="ChEBI" id="CHEBI:33699"/>
    </ligand>
    <ligandPart>
        <name>N(7)-methylguanosine 5'-triphosphate group</name>
        <dbReference type="ChEBI" id="CHEBI:74429"/>
        <note>m7GTP residue in mRNA cap</note>
    </ligandPart>
</feature>
<feature type="binding site" evidence="2">
    <location>
        <position position="97"/>
    </location>
    <ligand>
        <name>mRNA</name>
        <dbReference type="ChEBI" id="CHEBI:33699"/>
    </ligand>
    <ligandPart>
        <name>N(7)-methylguanosine 5'-triphosphate group</name>
        <dbReference type="ChEBI" id="CHEBI:74429"/>
        <note>m7GTP residue in mRNA cap</note>
    </ligandPart>
</feature>
<feature type="binding site" evidence="2">
    <location>
        <begin position="115"/>
        <end position="116"/>
    </location>
    <ligand>
        <name>mRNA</name>
        <dbReference type="ChEBI" id="CHEBI:33699"/>
    </ligand>
    <ligandPart>
        <name>N(7)-methylguanosine 5'-triphosphate group</name>
        <dbReference type="ChEBI" id="CHEBI:74429"/>
        <note>m7GTP residue in mRNA cap</note>
    </ligandPart>
</feature>
<feature type="binding site" evidence="2">
    <location>
        <begin position="165"/>
        <end position="170"/>
    </location>
    <ligand>
        <name>mRNA</name>
        <dbReference type="ChEBI" id="CHEBI:33699"/>
    </ligand>
    <ligandPart>
        <name>N(7)-methylguanosine 5'-triphosphate group</name>
        <dbReference type="ChEBI" id="CHEBI:74429"/>
        <note>m7GTP residue in mRNA cap</note>
    </ligandPart>
</feature>
<feature type="binding site" evidence="3">
    <location>
        <begin position="210"/>
        <end position="214"/>
    </location>
    <ligand>
        <name>mRNA</name>
        <dbReference type="ChEBI" id="CHEBI:33699"/>
    </ligand>
    <ligandPart>
        <name>N(7)-methylguanosine 5'-triphosphate group</name>
        <dbReference type="ChEBI" id="CHEBI:74429"/>
        <note>m7GTP residue in mRNA cap</note>
    </ligandPart>
</feature>
<feature type="disulfide bond" evidence="2">
    <location>
        <begin position="120"/>
        <end position="158"/>
    </location>
</feature>
<feature type="sequence conflict" description="In Ref. 3; QNT12790." evidence="11" ref="3">
    <original>S</original>
    <variation>C</variation>
    <location>
        <position position="186"/>
    </location>
</feature>
<feature type="sequence conflict" description="In Ref. 1; CBJ34332." evidence="11" ref="1">
    <original>I</original>
    <variation>V</variation>
    <location>
        <position position="201"/>
    </location>
</feature>